<organism>
    <name type="scientific">Cricetulus griseus</name>
    <name type="common">Chinese hamster</name>
    <name type="synonym">Cricetulus barabensis griseus</name>
    <dbReference type="NCBI Taxonomy" id="10029"/>
    <lineage>
        <taxon>Eukaryota</taxon>
        <taxon>Metazoa</taxon>
        <taxon>Chordata</taxon>
        <taxon>Craniata</taxon>
        <taxon>Vertebrata</taxon>
        <taxon>Euteleostomi</taxon>
        <taxon>Mammalia</taxon>
        <taxon>Eutheria</taxon>
        <taxon>Euarchontoglires</taxon>
        <taxon>Glires</taxon>
        <taxon>Rodentia</taxon>
        <taxon>Myomorpha</taxon>
        <taxon>Muroidea</taxon>
        <taxon>Cricetidae</taxon>
        <taxon>Cricetinae</taxon>
        <taxon>Cricetulus</taxon>
    </lineage>
</organism>
<comment type="function">
    <text evidence="1 3">Involved in the transfer of neutral lipids, including cholesteryl ester and triglyceride, among lipoprotein particles. Allows the net movement of cholesteryl ester from high density lipoproteins/HDL to triglyceride-rich very low density lipoproteins/VLDL, and the equimolar transport of triglyceride from VLDL to HDL (PubMed:24293641). Regulates the reverse cholesterol transport, by which excess cholesterol is removed from peripheral tissues and returned to the liver for elimination (By similarity).</text>
</comment>
<comment type="catalytic activity">
    <reaction evidence="1">
        <text>cholesteryl (9Z-octadecenoate)(in) = cholesteryl (9Z-octadecenoate)(out)</text>
        <dbReference type="Rhea" id="RHEA:43348"/>
        <dbReference type="ChEBI" id="CHEBI:46898"/>
    </reaction>
</comment>
<comment type="catalytic activity">
    <reaction evidence="1">
        <text>1,2,3-tri-(9Z-octadecenoyl)-glycerol(in) = 1,2,3-tri-(9Z-octadecenoyl)-glycerol(out)</text>
        <dbReference type="Rhea" id="RHEA:43352"/>
        <dbReference type="ChEBI" id="CHEBI:53753"/>
    </reaction>
</comment>
<comment type="catalytic activity">
    <reaction evidence="1">
        <text>cholesteryl (9Z,12Z)-octadecadienoate(in) = cholesteryl (9Z,12Z)-octadecadienoate(out)</text>
        <dbReference type="Rhea" id="RHEA:43356"/>
        <dbReference type="ChEBI" id="CHEBI:41509"/>
    </reaction>
</comment>
<comment type="subcellular location">
    <subcellularLocation>
        <location evidence="1">Secreted</location>
    </subcellularLocation>
    <text evidence="1">Secreted in plasma.</text>
</comment>
<comment type="similarity">
    <text evidence="5">Belongs to the BPI/LBP/Plunc superfamily. BPI/LBP family.</text>
</comment>
<comment type="sequence caution" evidence="5">
    <conflict type="erroneous gene model prediction">
        <sequence resource="EMBL-CDS" id="EGW00062"/>
    </conflict>
</comment>
<accession>G3HIK4</accession>
<protein>
    <recommendedName>
        <fullName evidence="4">Cholesteryl ester transfer protein</fullName>
    </recommendedName>
    <alternativeName>
        <fullName evidence="5">Lipid transfer protein I</fullName>
    </alternativeName>
</protein>
<proteinExistence type="inferred from homology"/>
<sequence>MLAVTLLSLALLGSTCACSTSTSYEAGIVCRITKAALLVLNQETAKVIQTAFQRASYPDIKGERSMMLLGRVTYGLHNIQISHLSIASSQVELVEAKSVDVSIQNASVIFKGTLNYGYKGAWGLNIEQSVDFEIESAIDLQINTKLTCDSGHVRTDAPDCSISFHKLLLHLQGEREPGWTKQLFTNIISFTLKMVLKGQVCKEINVISNIMADFVQTRAANIISDRDIEVDISLTRSPIITATYLESHHKGHFIYKNISEVLPLPAFSPTLLGDTRMLYFWFSEQVLDSLAKAAFQDGRLQLNLAETELKVVLETWHFNPNQEIIPEVITGFPSPGQVTVHCPRRPTISCQNKGVVVSSPVVMEFLFPHKDGQDSVTHTFEEDIVATIQASYSKKKLFLSLVDFQIKPKTTSNMAESSESIQNFLQLMITTVGIPEIMSRLEVALTTLMNSKGLDLFDIINPEIITRDGFLLLQMDFGFPEHLLVDFLQSLN</sequence>
<reference key="1">
    <citation type="journal article" date="2011" name="Nat. Biotechnol.">
        <title>The genomic sequence of the Chinese hamster ovary (CHO)-K1 cell line.</title>
        <authorList>
            <person name="Xu X."/>
            <person name="Nagarajan H."/>
            <person name="Lewis N.E."/>
            <person name="Pan S."/>
            <person name="Cai Z."/>
            <person name="Liu X."/>
            <person name="Chen W."/>
            <person name="Xie M."/>
            <person name="Wang W."/>
            <person name="Hammond S."/>
            <person name="Andersen M.R."/>
            <person name="Neff N."/>
            <person name="Passarelli B."/>
            <person name="Koh W."/>
            <person name="Fan H.C."/>
            <person name="Wang J."/>
            <person name="Gui Y."/>
            <person name="Lee K.H."/>
            <person name="Betenbaugh M.J."/>
            <person name="Quake S.R."/>
            <person name="Famili I."/>
            <person name="Palsson B.O."/>
            <person name="Wang J."/>
        </authorList>
    </citation>
    <scope>NUCLEOTIDE SEQUENCE [LARGE SCALE GENOMIC DNA]</scope>
</reference>
<reference key="2">
    <citation type="journal article" date="2014" name="J. Lipid Res.">
        <title>Cholesteryl ester transfer proteins from different species do not have equivalent activities.</title>
        <authorList>
            <person name="Morton R.E."/>
            <person name="Izem L."/>
        </authorList>
    </citation>
    <scope>FUNCTION</scope>
    <scope>SUBCELLULAR LOCATION</scope>
</reference>
<dbReference type="EMBL" id="JH000405">
    <property type="protein sequence ID" value="EGW00062.1"/>
    <property type="status" value="ALT_SEQ"/>
    <property type="molecule type" value="Genomic_DNA"/>
</dbReference>
<dbReference type="RefSeq" id="XP_003503662.1">
    <property type="nucleotide sequence ID" value="XM_003503614.2"/>
</dbReference>
<dbReference type="RefSeq" id="XP_007610321.1">
    <property type="nucleotide sequence ID" value="XM_007612131.2"/>
</dbReference>
<dbReference type="SMR" id="G3HIK4"/>
<dbReference type="STRING" id="10029.G3HIK4"/>
<dbReference type="SwissLipids" id="SLP:000000894"/>
<dbReference type="GlyCosmos" id="G3HIK4">
    <property type="glycosylation" value="1 site, No reported glycans"/>
</dbReference>
<dbReference type="PaxDb" id="10029-XP_007610321.1"/>
<dbReference type="eggNOG" id="KOG4160">
    <property type="taxonomic scope" value="Eukaryota"/>
</dbReference>
<dbReference type="InParanoid" id="G3HIK4"/>
<dbReference type="OrthoDB" id="9940758at2759"/>
<dbReference type="Proteomes" id="UP000001075">
    <property type="component" value="Unassembled WGS sequence"/>
</dbReference>
<dbReference type="Proteomes" id="UP000694386">
    <property type="component" value="Unplaced"/>
</dbReference>
<dbReference type="Proteomes" id="UP001108280">
    <property type="component" value="Unplaced"/>
</dbReference>
<dbReference type="GO" id="GO:0005615">
    <property type="term" value="C:extracellular space"/>
    <property type="evidence" value="ECO:0000314"/>
    <property type="project" value="UniProtKB"/>
</dbReference>
<dbReference type="GO" id="GO:0034364">
    <property type="term" value="C:high-density lipoprotein particle"/>
    <property type="evidence" value="ECO:0007669"/>
    <property type="project" value="InterPro"/>
</dbReference>
<dbReference type="GO" id="GO:0015485">
    <property type="term" value="F:cholesterol binding"/>
    <property type="evidence" value="ECO:0007669"/>
    <property type="project" value="TreeGrafter"/>
</dbReference>
<dbReference type="GO" id="GO:0120020">
    <property type="term" value="F:cholesterol transfer activity"/>
    <property type="evidence" value="ECO:0000314"/>
    <property type="project" value="UniProtKB"/>
</dbReference>
<dbReference type="GO" id="GO:0031210">
    <property type="term" value="F:phosphatidylcholine binding"/>
    <property type="evidence" value="ECO:0007669"/>
    <property type="project" value="TreeGrafter"/>
</dbReference>
<dbReference type="GO" id="GO:0005548">
    <property type="term" value="F:phospholipid transporter activity"/>
    <property type="evidence" value="ECO:0007669"/>
    <property type="project" value="TreeGrafter"/>
</dbReference>
<dbReference type="GO" id="GO:0017129">
    <property type="term" value="F:triglyceride binding"/>
    <property type="evidence" value="ECO:0007669"/>
    <property type="project" value="TreeGrafter"/>
</dbReference>
<dbReference type="GO" id="GO:0042632">
    <property type="term" value="P:cholesterol homeostasis"/>
    <property type="evidence" value="ECO:0007669"/>
    <property type="project" value="TreeGrafter"/>
</dbReference>
<dbReference type="GO" id="GO:0008203">
    <property type="term" value="P:cholesterol metabolic process"/>
    <property type="evidence" value="ECO:0007669"/>
    <property type="project" value="UniProtKB-KW"/>
</dbReference>
<dbReference type="GO" id="GO:0030301">
    <property type="term" value="P:cholesterol transport"/>
    <property type="evidence" value="ECO:0000314"/>
    <property type="project" value="UniProtKB"/>
</dbReference>
<dbReference type="GO" id="GO:0034375">
    <property type="term" value="P:high-density lipoprotein particle remodeling"/>
    <property type="evidence" value="ECO:0000314"/>
    <property type="project" value="UniProtKB"/>
</dbReference>
<dbReference type="GO" id="GO:0034374">
    <property type="term" value="P:low-density lipoprotein particle remodeling"/>
    <property type="evidence" value="ECO:0007669"/>
    <property type="project" value="TreeGrafter"/>
</dbReference>
<dbReference type="GO" id="GO:0046470">
    <property type="term" value="P:phosphatidylcholine metabolic process"/>
    <property type="evidence" value="ECO:0007669"/>
    <property type="project" value="TreeGrafter"/>
</dbReference>
<dbReference type="GO" id="GO:0055091">
    <property type="term" value="P:phospholipid homeostasis"/>
    <property type="evidence" value="ECO:0007669"/>
    <property type="project" value="TreeGrafter"/>
</dbReference>
<dbReference type="GO" id="GO:0043691">
    <property type="term" value="P:reverse cholesterol transport"/>
    <property type="evidence" value="ECO:0007669"/>
    <property type="project" value="InterPro"/>
</dbReference>
<dbReference type="GO" id="GO:0070328">
    <property type="term" value="P:triglyceride homeostasis"/>
    <property type="evidence" value="ECO:0007669"/>
    <property type="project" value="TreeGrafter"/>
</dbReference>
<dbReference type="GO" id="GO:0006641">
    <property type="term" value="P:triglyceride metabolic process"/>
    <property type="evidence" value="ECO:0007669"/>
    <property type="project" value="TreeGrafter"/>
</dbReference>
<dbReference type="GO" id="GO:0034197">
    <property type="term" value="P:triglyceride transport"/>
    <property type="evidence" value="ECO:0000314"/>
    <property type="project" value="UniProtKB"/>
</dbReference>
<dbReference type="GO" id="GO:0034372">
    <property type="term" value="P:very-low-density lipoprotein particle remodeling"/>
    <property type="evidence" value="ECO:0000314"/>
    <property type="project" value="UniProtKB"/>
</dbReference>
<dbReference type="CDD" id="cd00025">
    <property type="entry name" value="BPI1"/>
    <property type="match status" value="1"/>
</dbReference>
<dbReference type="FunFam" id="3.15.10.10:FF:000002">
    <property type="entry name" value="Cholesteryl ester transfer protein"/>
    <property type="match status" value="1"/>
</dbReference>
<dbReference type="FunFam" id="3.15.20.10:FF:000002">
    <property type="entry name" value="Cholesteryl ester transfer protein"/>
    <property type="match status" value="1"/>
</dbReference>
<dbReference type="Gene3D" id="3.15.10.10">
    <property type="entry name" value="Bactericidal permeability-increasing protein, domain 1"/>
    <property type="match status" value="1"/>
</dbReference>
<dbReference type="Gene3D" id="3.15.20.10">
    <property type="entry name" value="Bactericidal permeability-increasing protein, domain 2"/>
    <property type="match status" value="1"/>
</dbReference>
<dbReference type="InterPro" id="IPR017943">
    <property type="entry name" value="Bactericidal_perm-incr_a/b_dom"/>
</dbReference>
<dbReference type="InterPro" id="IPR017130">
    <property type="entry name" value="Cholesteryl_ester_transfer"/>
</dbReference>
<dbReference type="InterPro" id="IPR001124">
    <property type="entry name" value="Lipid-bd_serum_glycop_C"/>
</dbReference>
<dbReference type="InterPro" id="IPR017954">
    <property type="entry name" value="Lipid-bd_serum_glycop_CS"/>
</dbReference>
<dbReference type="InterPro" id="IPR017942">
    <property type="entry name" value="Lipid-bd_serum_glycop_N"/>
</dbReference>
<dbReference type="PANTHER" id="PTHR47616">
    <property type="entry name" value="CHOLESTERYL ESTER TRANSFER PROTEIN"/>
    <property type="match status" value="1"/>
</dbReference>
<dbReference type="PANTHER" id="PTHR47616:SF1">
    <property type="entry name" value="CHOLESTERYL ESTER TRANSFER PROTEIN"/>
    <property type="match status" value="1"/>
</dbReference>
<dbReference type="Pfam" id="PF01273">
    <property type="entry name" value="LBP_BPI_CETP"/>
    <property type="match status" value="1"/>
</dbReference>
<dbReference type="Pfam" id="PF02886">
    <property type="entry name" value="LBP_BPI_CETP_C"/>
    <property type="match status" value="1"/>
</dbReference>
<dbReference type="PIRSF" id="PIRSF037185">
    <property type="entry name" value="Cholesteryl_ester_transf"/>
    <property type="match status" value="1"/>
</dbReference>
<dbReference type="SMART" id="SM00328">
    <property type="entry name" value="BPI1"/>
    <property type="match status" value="1"/>
</dbReference>
<dbReference type="SMART" id="SM00329">
    <property type="entry name" value="BPI2"/>
    <property type="match status" value="1"/>
</dbReference>
<dbReference type="SUPFAM" id="SSF55394">
    <property type="entry name" value="Bactericidal permeability-increasing protein, BPI"/>
    <property type="match status" value="2"/>
</dbReference>
<dbReference type="PROSITE" id="PS00400">
    <property type="entry name" value="LBP_BPI_CETP"/>
    <property type="match status" value="1"/>
</dbReference>
<evidence type="ECO:0000250" key="1">
    <source>
        <dbReference type="UniProtKB" id="P11597"/>
    </source>
</evidence>
<evidence type="ECO:0000255" key="2"/>
<evidence type="ECO:0000269" key="3">
    <source>
    </source>
</evidence>
<evidence type="ECO:0000303" key="4">
    <source>
    </source>
</evidence>
<evidence type="ECO:0000305" key="5"/>
<name>CETP_CRIGR</name>
<gene>
    <name evidence="4" type="primary">CETP</name>
</gene>
<feature type="signal peptide" evidence="2">
    <location>
        <begin position="1"/>
        <end position="17"/>
    </location>
</feature>
<feature type="chain" id="PRO_0000431298" description="Cholesteryl ester transfer protein" evidence="2">
    <location>
        <begin position="18"/>
        <end position="492"/>
    </location>
</feature>
<feature type="glycosylation site" description="N-linked (GlcNAc...) asparagine" evidence="2">
    <location>
        <position position="257"/>
    </location>
</feature>
<feature type="disulfide bond" evidence="1">
    <location>
        <begin position="160"/>
        <end position="201"/>
    </location>
</feature>
<feature type="sequence conflict" description="In Ref. 1; EGW00062." evidence="5" ref="1">
    <original>VITGFP</original>
    <variation>LFSGLLT</variation>
    <location>
        <begin position="328"/>
        <end position="333"/>
    </location>
</feature>
<keyword id="KW-0153">Cholesterol metabolism</keyword>
<keyword id="KW-1015">Disulfide bond</keyword>
<keyword id="KW-0325">Glycoprotein</keyword>
<keyword id="KW-0443">Lipid metabolism</keyword>
<keyword id="KW-0445">Lipid transport</keyword>
<keyword id="KW-1185">Reference proteome</keyword>
<keyword id="KW-0964">Secreted</keyword>
<keyword id="KW-0732">Signal</keyword>
<keyword id="KW-0753">Steroid metabolism</keyword>
<keyword id="KW-1207">Sterol metabolism</keyword>
<keyword id="KW-0813">Transport</keyword>